<name>CATA2_NICPL</name>
<comment type="function">
    <text>Occurs in almost all aerobically respiring organisms and serves to protect cells from the toxic effects of hydrogen peroxide.</text>
</comment>
<comment type="catalytic activity">
    <reaction evidence="2">
        <text>2 H2O2 = O2 + 2 H2O</text>
        <dbReference type="Rhea" id="RHEA:20309"/>
        <dbReference type="ChEBI" id="CHEBI:15377"/>
        <dbReference type="ChEBI" id="CHEBI:15379"/>
        <dbReference type="ChEBI" id="CHEBI:16240"/>
        <dbReference type="EC" id="1.11.1.6"/>
    </reaction>
</comment>
<comment type="cofactor">
    <cofactor>
        <name>heme</name>
        <dbReference type="ChEBI" id="CHEBI:30413"/>
    </cofactor>
</comment>
<comment type="subunit">
    <text evidence="1">Homotetramer.</text>
</comment>
<comment type="subcellular location">
    <subcellularLocation>
        <location evidence="3">Peroxisome</location>
    </subcellularLocation>
</comment>
<comment type="induction">
    <text>By 3-aminotriazole.</text>
</comment>
<comment type="similarity">
    <text evidence="3">Belongs to the catalase family.</text>
</comment>
<keyword id="KW-0349">Heme</keyword>
<keyword id="KW-0376">Hydrogen peroxide</keyword>
<keyword id="KW-0408">Iron</keyword>
<keyword id="KW-0479">Metal-binding</keyword>
<keyword id="KW-0560">Oxidoreductase</keyword>
<keyword id="KW-0575">Peroxidase</keyword>
<keyword id="KW-0576">Peroxisome</keyword>
<feature type="chain" id="PRO_0000084950" description="Catalase isozyme 2">
    <location>
        <begin position="1"/>
        <end position="492"/>
    </location>
</feature>
<feature type="active site" evidence="2">
    <location>
        <position position="65"/>
    </location>
</feature>
<feature type="active site" evidence="2">
    <location>
        <position position="138"/>
    </location>
</feature>
<feature type="binding site" description="axial binding residue" evidence="1">
    <location>
        <position position="348"/>
    </location>
    <ligand>
        <name>heme</name>
        <dbReference type="ChEBI" id="CHEBI:30413"/>
    </ligand>
    <ligandPart>
        <name>Fe</name>
        <dbReference type="ChEBI" id="CHEBI:18248"/>
    </ligandPart>
</feature>
<accession>P49316</accession>
<proteinExistence type="evidence at transcript level"/>
<dbReference type="EC" id="1.11.1.6"/>
<dbReference type="EMBL" id="Z36976">
    <property type="protein sequence ID" value="CAA85425.1"/>
    <property type="molecule type" value="mRNA"/>
</dbReference>
<dbReference type="SMR" id="P49316"/>
<dbReference type="GO" id="GO:0005777">
    <property type="term" value="C:peroxisome"/>
    <property type="evidence" value="ECO:0007669"/>
    <property type="project" value="UniProtKB-SubCell"/>
</dbReference>
<dbReference type="GO" id="GO:0005886">
    <property type="term" value="C:plasma membrane"/>
    <property type="evidence" value="ECO:0007669"/>
    <property type="project" value="TreeGrafter"/>
</dbReference>
<dbReference type="GO" id="GO:0004096">
    <property type="term" value="F:catalase activity"/>
    <property type="evidence" value="ECO:0007669"/>
    <property type="project" value="UniProtKB-EC"/>
</dbReference>
<dbReference type="GO" id="GO:0020037">
    <property type="term" value="F:heme binding"/>
    <property type="evidence" value="ECO:0007669"/>
    <property type="project" value="InterPro"/>
</dbReference>
<dbReference type="GO" id="GO:0046872">
    <property type="term" value="F:metal ion binding"/>
    <property type="evidence" value="ECO:0007669"/>
    <property type="project" value="UniProtKB-KW"/>
</dbReference>
<dbReference type="GO" id="GO:0042744">
    <property type="term" value="P:hydrogen peroxide catabolic process"/>
    <property type="evidence" value="ECO:0007669"/>
    <property type="project" value="UniProtKB-KW"/>
</dbReference>
<dbReference type="GO" id="GO:0042542">
    <property type="term" value="P:response to hydrogen peroxide"/>
    <property type="evidence" value="ECO:0007669"/>
    <property type="project" value="TreeGrafter"/>
</dbReference>
<dbReference type="CDD" id="cd08154">
    <property type="entry name" value="catalase_clade_1"/>
    <property type="match status" value="1"/>
</dbReference>
<dbReference type="FunFam" id="2.40.180.10:FF:000002">
    <property type="entry name" value="Catalase"/>
    <property type="match status" value="1"/>
</dbReference>
<dbReference type="Gene3D" id="2.40.180.10">
    <property type="entry name" value="Catalase core domain"/>
    <property type="match status" value="1"/>
</dbReference>
<dbReference type="InterPro" id="IPR018028">
    <property type="entry name" value="Catalase"/>
</dbReference>
<dbReference type="InterPro" id="IPR024708">
    <property type="entry name" value="Catalase_AS"/>
</dbReference>
<dbReference type="InterPro" id="IPR024711">
    <property type="entry name" value="Catalase_clade1/3"/>
</dbReference>
<dbReference type="InterPro" id="IPR011614">
    <property type="entry name" value="Catalase_core"/>
</dbReference>
<dbReference type="InterPro" id="IPR002226">
    <property type="entry name" value="Catalase_haem_BS"/>
</dbReference>
<dbReference type="InterPro" id="IPR010582">
    <property type="entry name" value="Catalase_immune_responsive"/>
</dbReference>
<dbReference type="InterPro" id="IPR020835">
    <property type="entry name" value="Catalase_sf"/>
</dbReference>
<dbReference type="PANTHER" id="PTHR11465">
    <property type="entry name" value="CATALASE"/>
    <property type="match status" value="1"/>
</dbReference>
<dbReference type="PANTHER" id="PTHR11465:SF64">
    <property type="entry name" value="CATALASE ISOZYME 1"/>
    <property type="match status" value="1"/>
</dbReference>
<dbReference type="Pfam" id="PF00199">
    <property type="entry name" value="Catalase"/>
    <property type="match status" value="1"/>
</dbReference>
<dbReference type="Pfam" id="PF06628">
    <property type="entry name" value="Catalase-rel"/>
    <property type="match status" value="1"/>
</dbReference>
<dbReference type="PIRSF" id="PIRSF038928">
    <property type="entry name" value="Catalase_clade1-3"/>
    <property type="match status" value="1"/>
</dbReference>
<dbReference type="PRINTS" id="PR00067">
    <property type="entry name" value="CATALASE"/>
</dbReference>
<dbReference type="SMART" id="SM01060">
    <property type="entry name" value="Catalase"/>
    <property type="match status" value="1"/>
</dbReference>
<dbReference type="SUPFAM" id="SSF56634">
    <property type="entry name" value="Heme-dependent catalase-like"/>
    <property type="match status" value="1"/>
</dbReference>
<dbReference type="PROSITE" id="PS00437">
    <property type="entry name" value="CATALASE_1"/>
    <property type="match status" value="1"/>
</dbReference>
<dbReference type="PROSITE" id="PS00438">
    <property type="entry name" value="CATALASE_2"/>
    <property type="match status" value="1"/>
</dbReference>
<dbReference type="PROSITE" id="PS51402">
    <property type="entry name" value="CATALASE_3"/>
    <property type="match status" value="1"/>
</dbReference>
<reference key="1">
    <citation type="journal article" date="1994" name="FEBS Lett.">
        <title>Molecular identification of catalases from Nicotiana plumbaginifolia (L.).</title>
        <authorList>
            <person name="Willekens H."/>
            <person name="Villarroel R."/>
            <person name="van Montagu M."/>
            <person name="Inze D."/>
            <person name="van Camp W."/>
        </authorList>
    </citation>
    <scope>NUCLEOTIDE SEQUENCE [MRNA]</scope>
    <source>
        <tissue>Leaf</tissue>
    </source>
</reference>
<sequence>MDPSKFRPSSAYDSPFLTTNAGGPVYNNVSSLTVGPRGPVLLEDYHLIEKLATFDRERIPERVVHARGASAKGFFEVTHDISHLTCADFLRAPGVQTPVIVRFSTVVHERGSPESLRDIRGFAVKFYTREGNFDLVGNNVPVFFNRDAKSFPDTIRALKPNPKSHIQEYWRILDFFSFLPESLHTFAWFFDDVCLPINYRHMEGYGVHAYQLINKAGKAHYVKFHWKPTCGVKCMTEEEAIRVGGTNHSHATKDLYDSIAVGNYPEWKLSIHIMDPEDVERFDFDPLDVTKIWPEDILPLMPVGRLVLNRNIDNFFAENEQLAFNPGHIVPGLYYSEDKLLQTRIFAYADTQRHRIGPNYMQLPVNAPKCAHHNNHRDGAMNFMHRDEEVDYLPSRFDPCRHAEQYPIPSRVLNGRREMCVIEKENNFKQAGERYRSWEPDRQDRYVSKWVEHLSDPRVTYEIRSIWISYLSQADKSCGQKVASRLTLKPTM</sequence>
<protein>
    <recommendedName>
        <fullName>Catalase isozyme 2</fullName>
        <ecNumber>1.11.1.6</ecNumber>
    </recommendedName>
</protein>
<evidence type="ECO:0000250" key="1"/>
<evidence type="ECO:0000255" key="2">
    <source>
        <dbReference type="PROSITE-ProRule" id="PRU10013"/>
    </source>
</evidence>
<evidence type="ECO:0000305" key="3"/>
<organism>
    <name type="scientific">Nicotiana plumbaginifolia</name>
    <name type="common">Leadwort-leaved tobacco</name>
    <name type="synonym">Tex-Mex tobacco</name>
    <dbReference type="NCBI Taxonomy" id="4092"/>
    <lineage>
        <taxon>Eukaryota</taxon>
        <taxon>Viridiplantae</taxon>
        <taxon>Streptophyta</taxon>
        <taxon>Embryophyta</taxon>
        <taxon>Tracheophyta</taxon>
        <taxon>Spermatophyta</taxon>
        <taxon>Magnoliopsida</taxon>
        <taxon>eudicotyledons</taxon>
        <taxon>Gunneridae</taxon>
        <taxon>Pentapetalae</taxon>
        <taxon>asterids</taxon>
        <taxon>lamiids</taxon>
        <taxon>Solanales</taxon>
        <taxon>Solanaceae</taxon>
        <taxon>Nicotianoideae</taxon>
        <taxon>Nicotianeae</taxon>
        <taxon>Nicotiana</taxon>
    </lineage>
</organism>
<gene>
    <name type="primary">CAT2</name>
</gene>